<proteinExistence type="inferred from homology"/>
<keyword id="KW-0001">2Fe-2S</keyword>
<keyword id="KW-0028">Amino-acid biosynthesis</keyword>
<keyword id="KW-0100">Branched-chain amino acid biosynthesis</keyword>
<keyword id="KW-0408">Iron</keyword>
<keyword id="KW-0411">Iron-sulfur</keyword>
<keyword id="KW-0456">Lyase</keyword>
<keyword id="KW-0460">Magnesium</keyword>
<keyword id="KW-0479">Metal-binding</keyword>
<keyword id="KW-1185">Reference proteome</keyword>
<reference key="1">
    <citation type="journal article" date="2009" name="Genome Res.">
        <title>Complete genome of the cellulolytic thermophile Acidothermus cellulolyticus 11B provides insights into its ecophysiological and evolutionary adaptations.</title>
        <authorList>
            <person name="Barabote R.D."/>
            <person name="Xie G."/>
            <person name="Leu D.H."/>
            <person name="Normand P."/>
            <person name="Necsulea A."/>
            <person name="Daubin V."/>
            <person name="Medigue C."/>
            <person name="Adney W.S."/>
            <person name="Xu X.C."/>
            <person name="Lapidus A."/>
            <person name="Parales R.E."/>
            <person name="Detter C."/>
            <person name="Pujic P."/>
            <person name="Bruce D."/>
            <person name="Lavire C."/>
            <person name="Challacombe J.F."/>
            <person name="Brettin T.S."/>
            <person name="Berry A.M."/>
        </authorList>
    </citation>
    <scope>NUCLEOTIDE SEQUENCE [LARGE SCALE GENOMIC DNA]</scope>
    <source>
        <strain>ATCC 43068 / DSM 8971 / 11B</strain>
    </source>
</reference>
<name>ILVD_ACIC1</name>
<accession>A0LSR8</accession>
<dbReference type="EC" id="4.2.1.9" evidence="1"/>
<dbReference type="EMBL" id="CP000481">
    <property type="protein sequence ID" value="ABK52478.1"/>
    <property type="molecule type" value="Genomic_DNA"/>
</dbReference>
<dbReference type="RefSeq" id="WP_011719541.1">
    <property type="nucleotide sequence ID" value="NC_008578.1"/>
</dbReference>
<dbReference type="SMR" id="A0LSR8"/>
<dbReference type="FunCoup" id="A0LSR8">
    <property type="interactions" value="295"/>
</dbReference>
<dbReference type="STRING" id="351607.Acel_0705"/>
<dbReference type="KEGG" id="ace:Acel_0705"/>
<dbReference type="eggNOG" id="COG0129">
    <property type="taxonomic scope" value="Bacteria"/>
</dbReference>
<dbReference type="HOGENOM" id="CLU_014271_4_2_11"/>
<dbReference type="InParanoid" id="A0LSR8"/>
<dbReference type="OrthoDB" id="9807077at2"/>
<dbReference type="UniPathway" id="UPA00047">
    <property type="reaction ID" value="UER00057"/>
</dbReference>
<dbReference type="UniPathway" id="UPA00049">
    <property type="reaction ID" value="UER00061"/>
</dbReference>
<dbReference type="Proteomes" id="UP000008221">
    <property type="component" value="Chromosome"/>
</dbReference>
<dbReference type="GO" id="GO:0051537">
    <property type="term" value="F:2 iron, 2 sulfur cluster binding"/>
    <property type="evidence" value="ECO:0007669"/>
    <property type="project" value="UniProtKB-UniRule"/>
</dbReference>
<dbReference type="GO" id="GO:0004160">
    <property type="term" value="F:dihydroxy-acid dehydratase activity"/>
    <property type="evidence" value="ECO:0007669"/>
    <property type="project" value="UniProtKB-UniRule"/>
</dbReference>
<dbReference type="GO" id="GO:0000287">
    <property type="term" value="F:magnesium ion binding"/>
    <property type="evidence" value="ECO:0007669"/>
    <property type="project" value="UniProtKB-UniRule"/>
</dbReference>
<dbReference type="GO" id="GO:0009097">
    <property type="term" value="P:isoleucine biosynthetic process"/>
    <property type="evidence" value="ECO:0007669"/>
    <property type="project" value="UniProtKB-UniRule"/>
</dbReference>
<dbReference type="GO" id="GO:0009099">
    <property type="term" value="P:L-valine biosynthetic process"/>
    <property type="evidence" value="ECO:0007669"/>
    <property type="project" value="UniProtKB-UniRule"/>
</dbReference>
<dbReference type="FunFam" id="3.50.30.80:FF:000001">
    <property type="entry name" value="Dihydroxy-acid dehydratase"/>
    <property type="match status" value="1"/>
</dbReference>
<dbReference type="Gene3D" id="3.50.30.80">
    <property type="entry name" value="IlvD/EDD C-terminal domain-like"/>
    <property type="match status" value="1"/>
</dbReference>
<dbReference type="HAMAP" id="MF_00012">
    <property type="entry name" value="IlvD"/>
    <property type="match status" value="1"/>
</dbReference>
<dbReference type="InterPro" id="IPR050165">
    <property type="entry name" value="DHAD_IlvD/Edd"/>
</dbReference>
<dbReference type="InterPro" id="IPR042096">
    <property type="entry name" value="Dihydro-acid_dehy_C"/>
</dbReference>
<dbReference type="InterPro" id="IPR004404">
    <property type="entry name" value="DihydroxyA_deHydtase"/>
</dbReference>
<dbReference type="InterPro" id="IPR020558">
    <property type="entry name" value="DiOHA_6PGluconate_deHydtase_CS"/>
</dbReference>
<dbReference type="InterPro" id="IPR056740">
    <property type="entry name" value="ILV_EDD_C"/>
</dbReference>
<dbReference type="InterPro" id="IPR000581">
    <property type="entry name" value="ILV_EDD_N"/>
</dbReference>
<dbReference type="InterPro" id="IPR037237">
    <property type="entry name" value="IlvD/EDD_N"/>
</dbReference>
<dbReference type="NCBIfam" id="TIGR00110">
    <property type="entry name" value="ilvD"/>
    <property type="match status" value="1"/>
</dbReference>
<dbReference type="NCBIfam" id="NF002068">
    <property type="entry name" value="PRK00911.1"/>
    <property type="match status" value="1"/>
</dbReference>
<dbReference type="PANTHER" id="PTHR21000">
    <property type="entry name" value="DIHYDROXY-ACID DEHYDRATASE DAD"/>
    <property type="match status" value="1"/>
</dbReference>
<dbReference type="PANTHER" id="PTHR21000:SF5">
    <property type="entry name" value="DIHYDROXY-ACID DEHYDRATASE, MITOCHONDRIAL"/>
    <property type="match status" value="1"/>
</dbReference>
<dbReference type="Pfam" id="PF24877">
    <property type="entry name" value="ILV_EDD_C"/>
    <property type="match status" value="1"/>
</dbReference>
<dbReference type="Pfam" id="PF00920">
    <property type="entry name" value="ILVD_EDD_N"/>
    <property type="match status" value="1"/>
</dbReference>
<dbReference type="SUPFAM" id="SSF143975">
    <property type="entry name" value="IlvD/EDD N-terminal domain-like"/>
    <property type="match status" value="1"/>
</dbReference>
<dbReference type="SUPFAM" id="SSF52016">
    <property type="entry name" value="LeuD/IlvD-like"/>
    <property type="match status" value="1"/>
</dbReference>
<dbReference type="PROSITE" id="PS00886">
    <property type="entry name" value="ILVD_EDD_1"/>
    <property type="match status" value="1"/>
</dbReference>
<dbReference type="PROSITE" id="PS00887">
    <property type="entry name" value="ILVD_EDD_2"/>
    <property type="match status" value="1"/>
</dbReference>
<protein>
    <recommendedName>
        <fullName evidence="1">Dihydroxy-acid dehydratase</fullName>
        <shortName evidence="1">DAD</shortName>
        <ecNumber evidence="1">4.2.1.9</ecNumber>
    </recommendedName>
</protein>
<sequence>MRAQPDLKPRSRDVTDGLERAAARGMLRAVGMTDADWEKPQIGVASSWNEITPCNLSLDRLAQAAKEGVHAAGGYPLEFATISVSDGISMGHEGMHFSLISREVIADSVETVFMAERFDGAVLLAGCDKSEPGMLMAAARLDLAAVFLYAGSTLPGKLGDRDINIVDAFEAVGGCLRGLVSREEVDAIERNFCPVEGACAGMFTANTMASAAEALGMSLPGSASPPAPDRRRDGFARASGEAVVNLLRRGITARDIMTREAFENAIAVVMALGGSTNAVLHLLAIAREANVDLAIDDFNRIGDRVPHLADVKPFGRYVMSDVDRVGGVPVVMKALLDAGLLHGDCLTVTGKTVAENLADITPPDPDGKVIHALTQPIHRTGGLAILRGSLAPDGAVVKTAGLESTFFEGTARVFDGEEAAMRAVPELRPGDVVVIRYEGPKGGPGMREMLAVTGAIKGAGLGKDVLLVTDGRFSGGTTGFCVAHVAPEAVDGGPIAFVRDGDRIRLDAQARTLDLLVDADELAKRRADWQPPPPRYTTGVAAKYVKLVGSASEGAICR</sequence>
<evidence type="ECO:0000255" key="1">
    <source>
        <dbReference type="HAMAP-Rule" id="MF_00012"/>
    </source>
</evidence>
<comment type="function">
    <text evidence="1">Functions in the biosynthesis of branched-chain amino acids. Catalyzes the dehydration of (2R,3R)-2,3-dihydroxy-3-methylpentanoate (2,3-dihydroxy-3-methylvalerate) into 2-oxo-3-methylpentanoate (2-oxo-3-methylvalerate) and of (2R)-2,3-dihydroxy-3-methylbutanoate (2,3-dihydroxyisovalerate) into 2-oxo-3-methylbutanoate (2-oxoisovalerate), the penultimate precursor to L-isoleucine and L-valine, respectively.</text>
</comment>
<comment type="catalytic activity">
    <reaction evidence="1">
        <text>(2R)-2,3-dihydroxy-3-methylbutanoate = 3-methyl-2-oxobutanoate + H2O</text>
        <dbReference type="Rhea" id="RHEA:24809"/>
        <dbReference type="ChEBI" id="CHEBI:11851"/>
        <dbReference type="ChEBI" id="CHEBI:15377"/>
        <dbReference type="ChEBI" id="CHEBI:49072"/>
        <dbReference type="EC" id="4.2.1.9"/>
    </reaction>
    <physiologicalReaction direction="left-to-right" evidence="1">
        <dbReference type="Rhea" id="RHEA:24810"/>
    </physiologicalReaction>
</comment>
<comment type="catalytic activity">
    <reaction evidence="1">
        <text>(2R,3R)-2,3-dihydroxy-3-methylpentanoate = (S)-3-methyl-2-oxopentanoate + H2O</text>
        <dbReference type="Rhea" id="RHEA:27694"/>
        <dbReference type="ChEBI" id="CHEBI:15377"/>
        <dbReference type="ChEBI" id="CHEBI:35146"/>
        <dbReference type="ChEBI" id="CHEBI:49258"/>
        <dbReference type="EC" id="4.2.1.9"/>
    </reaction>
    <physiologicalReaction direction="left-to-right" evidence="1">
        <dbReference type="Rhea" id="RHEA:27695"/>
    </physiologicalReaction>
</comment>
<comment type="cofactor">
    <cofactor evidence="1">
        <name>[2Fe-2S] cluster</name>
        <dbReference type="ChEBI" id="CHEBI:190135"/>
    </cofactor>
    <text evidence="1">Binds 1 [2Fe-2S] cluster per subunit. This cluster acts as a Lewis acid cofactor.</text>
</comment>
<comment type="cofactor">
    <cofactor evidence="1">
        <name>Mg(2+)</name>
        <dbReference type="ChEBI" id="CHEBI:18420"/>
    </cofactor>
</comment>
<comment type="pathway">
    <text evidence="1">Amino-acid biosynthesis; L-isoleucine biosynthesis; L-isoleucine from 2-oxobutanoate: step 3/4.</text>
</comment>
<comment type="pathway">
    <text evidence="1">Amino-acid biosynthesis; L-valine biosynthesis; L-valine from pyruvate: step 3/4.</text>
</comment>
<comment type="subunit">
    <text evidence="1">Homodimer.</text>
</comment>
<comment type="similarity">
    <text evidence="1">Belongs to the IlvD/Edd family.</text>
</comment>
<organism>
    <name type="scientific">Acidothermus cellulolyticus (strain ATCC 43068 / DSM 8971 / 11B)</name>
    <dbReference type="NCBI Taxonomy" id="351607"/>
    <lineage>
        <taxon>Bacteria</taxon>
        <taxon>Bacillati</taxon>
        <taxon>Actinomycetota</taxon>
        <taxon>Actinomycetes</taxon>
        <taxon>Acidothermales</taxon>
        <taxon>Acidothermaceae</taxon>
        <taxon>Acidothermus</taxon>
    </lineage>
</organism>
<gene>
    <name evidence="1" type="primary">ilvD</name>
    <name type="ordered locus">Acel_0705</name>
</gene>
<feature type="chain" id="PRO_0000321588" description="Dihydroxy-acid dehydratase">
    <location>
        <begin position="1"/>
        <end position="558"/>
    </location>
</feature>
<feature type="active site" description="Proton acceptor" evidence="1">
    <location>
        <position position="474"/>
    </location>
</feature>
<feature type="binding site" evidence="1">
    <location>
        <position position="54"/>
    </location>
    <ligand>
        <name>[2Fe-2S] cluster</name>
        <dbReference type="ChEBI" id="CHEBI:190135"/>
    </ligand>
</feature>
<feature type="binding site" evidence="1">
    <location>
        <position position="86"/>
    </location>
    <ligand>
        <name>Mg(2+)</name>
        <dbReference type="ChEBI" id="CHEBI:18420"/>
    </ligand>
</feature>
<feature type="binding site" evidence="1">
    <location>
        <position position="127"/>
    </location>
    <ligand>
        <name>[2Fe-2S] cluster</name>
        <dbReference type="ChEBI" id="CHEBI:190135"/>
    </ligand>
</feature>
<feature type="binding site" evidence="1">
    <location>
        <position position="128"/>
    </location>
    <ligand>
        <name>Mg(2+)</name>
        <dbReference type="ChEBI" id="CHEBI:18420"/>
    </ligand>
</feature>
<feature type="binding site" description="via carbamate group" evidence="1">
    <location>
        <position position="129"/>
    </location>
    <ligand>
        <name>Mg(2+)</name>
        <dbReference type="ChEBI" id="CHEBI:18420"/>
    </ligand>
</feature>
<feature type="binding site" evidence="1">
    <location>
        <position position="199"/>
    </location>
    <ligand>
        <name>[2Fe-2S] cluster</name>
        <dbReference type="ChEBI" id="CHEBI:190135"/>
    </ligand>
</feature>
<feature type="binding site" evidence="1">
    <location>
        <position position="448"/>
    </location>
    <ligand>
        <name>Mg(2+)</name>
        <dbReference type="ChEBI" id="CHEBI:18420"/>
    </ligand>
</feature>
<feature type="modified residue" description="N6-carboxylysine" evidence="1">
    <location>
        <position position="129"/>
    </location>
</feature>